<sequence>SGSCTTQTCWLQLPEFREVGNYLKEKYHRALKVDLLRGAGNSAASRGAIAETFSSISRKELVHLEDSPDYCLENRTLGLPGTEGRECLKKGKNLSKWEKRSCKRLCGECGLAVEERKAEMVSSCNCKF</sequence>
<name>WNT8_THUTH</name>
<keyword id="KW-0217">Developmental protein</keyword>
<keyword id="KW-1015">Disulfide bond</keyword>
<keyword id="KW-0272">Extracellular matrix</keyword>
<keyword id="KW-0325">Glycoprotein</keyword>
<keyword id="KW-0449">Lipoprotein</keyword>
<keyword id="KW-0964">Secreted</keyword>
<keyword id="KW-0879">Wnt signaling pathway</keyword>
<protein>
    <recommendedName>
        <fullName>Protein Wnt-8</fullName>
    </recommendedName>
</protein>
<comment type="function">
    <text>Ligand for members of the frizzled family of seven transmembrane receptors. Probable developmental protein. May be a signaling molecule which affects the development of discrete regions of tissues. Is likely to signal over only few cell diameters.</text>
</comment>
<comment type="subcellular location">
    <subcellularLocation>
        <location>Secreted</location>
        <location>Extracellular space</location>
        <location>Extracellular matrix</location>
    </subcellularLocation>
</comment>
<comment type="PTM">
    <text evidence="1 2">Palmitoleoylation is required for efficient binding to frizzled receptors (By similarity). Depalmitoleoylation leads to Wnt signaling pathway inhibition (By similarity).</text>
</comment>
<comment type="PTM">
    <text evidence="1">Proteolytic processing by tiki1 and tiki2 promotes oxidation and formation of large disulfide-bond oligomers, leading to inactivation of wnt8.</text>
</comment>
<comment type="similarity">
    <text evidence="4">Belongs to the Wnt family.</text>
</comment>
<evidence type="ECO:0000250" key="1">
    <source>
        <dbReference type="UniProtKB" id="P28026"/>
    </source>
</evidence>
<evidence type="ECO:0000250" key="2">
    <source>
        <dbReference type="UniProtKB" id="P56704"/>
    </source>
</evidence>
<evidence type="ECO:0000255" key="3"/>
<evidence type="ECO:0000305" key="4"/>
<proteinExistence type="inferred from homology"/>
<accession>P28146</accession>
<gene>
    <name type="primary">wnt8</name>
</gene>
<dbReference type="EMBL" id="M91308">
    <property type="protein sequence ID" value="AAA49625.1"/>
    <property type="molecule type" value="Genomic_DNA"/>
</dbReference>
<dbReference type="SMR" id="P28146"/>
<dbReference type="GlyCosmos" id="P28146">
    <property type="glycosylation" value="2 sites, No reported glycans"/>
</dbReference>
<dbReference type="GO" id="GO:0005615">
    <property type="term" value="C:extracellular space"/>
    <property type="evidence" value="ECO:0007669"/>
    <property type="project" value="TreeGrafter"/>
</dbReference>
<dbReference type="GO" id="GO:0005125">
    <property type="term" value="F:cytokine activity"/>
    <property type="evidence" value="ECO:0007669"/>
    <property type="project" value="TreeGrafter"/>
</dbReference>
<dbReference type="GO" id="GO:0005109">
    <property type="term" value="F:frizzled binding"/>
    <property type="evidence" value="ECO:0007669"/>
    <property type="project" value="TreeGrafter"/>
</dbReference>
<dbReference type="GO" id="GO:0048513">
    <property type="term" value="P:animal organ development"/>
    <property type="evidence" value="ECO:0007669"/>
    <property type="project" value="UniProtKB-ARBA"/>
</dbReference>
<dbReference type="GO" id="GO:0060070">
    <property type="term" value="P:canonical Wnt signaling pathway"/>
    <property type="evidence" value="ECO:0007669"/>
    <property type="project" value="TreeGrafter"/>
</dbReference>
<dbReference type="GO" id="GO:0045165">
    <property type="term" value="P:cell fate commitment"/>
    <property type="evidence" value="ECO:0007669"/>
    <property type="project" value="TreeGrafter"/>
</dbReference>
<dbReference type="GO" id="GO:0030182">
    <property type="term" value="P:neuron differentiation"/>
    <property type="evidence" value="ECO:0007669"/>
    <property type="project" value="TreeGrafter"/>
</dbReference>
<dbReference type="FunFam" id="3.30.2460.20:FF:000003">
    <property type="entry name" value="Protein Wnt"/>
    <property type="match status" value="1"/>
</dbReference>
<dbReference type="Gene3D" id="3.30.2460.20">
    <property type="match status" value="1"/>
</dbReference>
<dbReference type="InterPro" id="IPR005817">
    <property type="entry name" value="Wnt"/>
</dbReference>
<dbReference type="InterPro" id="IPR013301">
    <property type="entry name" value="Wnt8"/>
</dbReference>
<dbReference type="InterPro" id="IPR043158">
    <property type="entry name" value="Wnt_C"/>
</dbReference>
<dbReference type="PANTHER" id="PTHR12027:SF94">
    <property type="entry name" value="PROTEIN WNT-8B"/>
    <property type="match status" value="1"/>
</dbReference>
<dbReference type="PANTHER" id="PTHR12027">
    <property type="entry name" value="WNT RELATED"/>
    <property type="match status" value="1"/>
</dbReference>
<dbReference type="Pfam" id="PF00110">
    <property type="entry name" value="wnt"/>
    <property type="match status" value="1"/>
</dbReference>
<dbReference type="PRINTS" id="PR01892">
    <property type="entry name" value="WNT8PROTEIN"/>
</dbReference>
<dbReference type="SMART" id="SM00097">
    <property type="entry name" value="WNT1"/>
    <property type="match status" value="1"/>
</dbReference>
<feature type="chain" id="PRO_0000200659" description="Protein Wnt-8">
    <location>
        <begin position="1" status="less than"/>
        <end position="128" status="greater than"/>
    </location>
</feature>
<feature type="lipid moiety-binding region" description="O-palmitoleoyl serine" evidence="1">
    <location>
        <position position="1"/>
    </location>
</feature>
<feature type="glycosylation site" description="N-linked (GlcNAc...) asparagine" evidence="3">
    <location>
        <position position="74"/>
    </location>
</feature>
<feature type="glycosylation site" description="N-linked (GlcNAc...) asparagine" evidence="3">
    <location>
        <position position="93"/>
    </location>
</feature>
<feature type="disulfide bond" evidence="1">
    <location>
        <begin position="71"/>
        <end position="109"/>
    </location>
</feature>
<feature type="disulfide bond" evidence="1">
    <location>
        <begin position="87"/>
        <end position="102"/>
    </location>
</feature>
<feature type="non-terminal residue">
    <location>
        <position position="1"/>
    </location>
</feature>
<feature type="non-terminal residue">
    <location>
        <position position="128"/>
    </location>
</feature>
<reference key="1">
    <citation type="journal article" date="1992" name="Proc. Natl. Acad. Sci. U.S.A.">
        <title>Diversification of the Wnt gene family on the ancestral lineage of vertebrates.</title>
        <authorList>
            <person name="Sidow A."/>
        </authorList>
    </citation>
    <scope>NUCLEOTIDE SEQUENCE [GENOMIC DNA]</scope>
</reference>
<organism>
    <name type="scientific">Thunnus thynnus</name>
    <name type="common">Atlantic bluefin tuna</name>
    <name type="synonym">Scomber thynnus</name>
    <dbReference type="NCBI Taxonomy" id="8237"/>
    <lineage>
        <taxon>Eukaryota</taxon>
        <taxon>Metazoa</taxon>
        <taxon>Chordata</taxon>
        <taxon>Craniata</taxon>
        <taxon>Vertebrata</taxon>
        <taxon>Euteleostomi</taxon>
        <taxon>Actinopterygii</taxon>
        <taxon>Neopterygii</taxon>
        <taxon>Teleostei</taxon>
        <taxon>Neoteleostei</taxon>
        <taxon>Acanthomorphata</taxon>
        <taxon>Pelagiaria</taxon>
        <taxon>Scombriformes</taxon>
        <taxon>Scombridae</taxon>
        <taxon>Thunnus</taxon>
    </lineage>
</organism>